<comment type="function">
    <text evidence="1">Binds to actin and plays an important role in the assembly of the Z-disk. May functionally link sarcomeric actin to the desmin intermediate filaments in the heart muscle sarcomeres. Isoform 2 might play a role in the assembly of focal adhesion (By similarity).</text>
</comment>
<comment type="subunit">
    <text evidence="1">Interacts (via nebulin repeats 1-5) with DESM (via rod region) (By similarity). Interacts (via SH3 domain) with XIRP2 (By similarity).</text>
</comment>
<comment type="subcellular location">
    <subcellularLocation>
        <location evidence="1">Cytoplasm</location>
    </subcellularLocation>
</comment>
<comment type="alternative products">
    <event type="alternative splicing"/>
    <isoform>
        <id>Q0II04-1</id>
        <name>1</name>
        <sequence type="displayed"/>
    </isoform>
    <isoform>
        <id>Q9DC07-1</id>
        <name>2</name>
        <name>LIM-Nebulette</name>
        <name>LIM-NBEL</name>
        <name>LNBEL</name>
        <sequence type="external"/>
    </isoform>
    <text>Additional isoforms exist.</text>
</comment>
<protein>
    <recommendedName>
        <fullName>Nebulette</fullName>
    </recommendedName>
    <alternativeName>
        <fullName>Actin-binding Z-disk protein</fullName>
    </alternativeName>
</protein>
<dbReference type="EMBL" id="AL845498">
    <property type="status" value="NOT_ANNOTATED_CDS"/>
    <property type="molecule type" value="Genomic_DNA"/>
</dbReference>
<dbReference type="EMBL" id="AL935297">
    <property type="status" value="NOT_ANNOTATED_CDS"/>
    <property type="molecule type" value="Genomic_DNA"/>
</dbReference>
<dbReference type="EMBL" id="AL954131">
    <property type="status" value="NOT_ANNOTATED_CDS"/>
    <property type="molecule type" value="Genomic_DNA"/>
</dbReference>
<dbReference type="EMBL" id="AL772218">
    <property type="status" value="NOT_ANNOTATED_CDS"/>
    <property type="molecule type" value="Genomic_DNA"/>
</dbReference>
<dbReference type="EMBL" id="BC122879">
    <property type="protein sequence ID" value="AAI22880.1"/>
    <property type="molecule type" value="mRNA"/>
</dbReference>
<dbReference type="SMR" id="Q0II04"/>
<dbReference type="GlyGen" id="Q0II04">
    <property type="glycosylation" value="2 sites, 1 N-linked glycan (1 site), 1 O-linked glycan (1 site)"/>
</dbReference>
<dbReference type="jPOST" id="Q0II04"/>
<dbReference type="PaxDb" id="10090-ENSMUSP00000122024"/>
<dbReference type="ProteomicsDB" id="253051">
    <molecule id="Q0II04-1"/>
</dbReference>
<dbReference type="Antibodypedia" id="2823">
    <property type="antibodies" value="75 antibodies from 18 providers"/>
</dbReference>
<dbReference type="Ensembl" id="ENSMUST00000132418.8">
    <molecule id="Q0II04-1"/>
    <property type="protein sequence ID" value="ENSMUSP00000122024.2"/>
    <property type="gene ID" value="ENSMUSG00000053702.17"/>
</dbReference>
<dbReference type="UCSC" id="uc008ilf.1">
    <molecule id="Q0II04-1"/>
    <property type="organism name" value="mouse"/>
</dbReference>
<dbReference type="AGR" id="MGI:1921353"/>
<dbReference type="MGI" id="MGI:1921353">
    <property type="gene designation" value="Nebl"/>
</dbReference>
<dbReference type="VEuPathDB" id="HostDB:ENSMUSG00000053702"/>
<dbReference type="eggNOG" id="KOG1702">
    <property type="taxonomic scope" value="Eukaryota"/>
</dbReference>
<dbReference type="GeneTree" id="ENSGT00940000156390"/>
<dbReference type="HOGENOM" id="CLU_027047_0_0_1"/>
<dbReference type="InParanoid" id="Q0II04"/>
<dbReference type="TreeFam" id="TF319104"/>
<dbReference type="CD-CODE" id="CE726F99">
    <property type="entry name" value="Postsynaptic density"/>
</dbReference>
<dbReference type="ChiTaRS" id="Nebl">
    <property type="organism name" value="mouse"/>
</dbReference>
<dbReference type="Proteomes" id="UP000000589">
    <property type="component" value="Chromosome 2"/>
</dbReference>
<dbReference type="RNAct" id="Q0II04">
    <property type="molecule type" value="protein"/>
</dbReference>
<dbReference type="Bgee" id="ENSMUSG00000053702">
    <property type="expression patterns" value="Expressed in interventricular septum and 198 other cell types or tissues"/>
</dbReference>
<dbReference type="ExpressionAtlas" id="Q0II04">
    <property type="expression patterns" value="baseline and differential"/>
</dbReference>
<dbReference type="GO" id="GO:0030018">
    <property type="term" value="C:Z disc"/>
    <property type="evidence" value="ECO:0007669"/>
    <property type="project" value="InterPro"/>
</dbReference>
<dbReference type="GO" id="GO:0051015">
    <property type="term" value="F:actin filament binding"/>
    <property type="evidence" value="ECO:0007669"/>
    <property type="project" value="InterPro"/>
</dbReference>
<dbReference type="InterPro" id="IPR055297">
    <property type="entry name" value="NEBU/NEBL"/>
</dbReference>
<dbReference type="InterPro" id="IPR000900">
    <property type="entry name" value="Nebulin_repeat"/>
</dbReference>
<dbReference type="PANTHER" id="PTHR11039:SF48">
    <property type="entry name" value="NEBULETTE"/>
    <property type="match status" value="1"/>
</dbReference>
<dbReference type="PANTHER" id="PTHR11039">
    <property type="entry name" value="NEBULIN"/>
    <property type="match status" value="1"/>
</dbReference>
<dbReference type="Pfam" id="PF00880">
    <property type="entry name" value="Nebulin"/>
    <property type="match status" value="5"/>
</dbReference>
<dbReference type="SMART" id="SM00227">
    <property type="entry name" value="NEBU"/>
    <property type="match status" value="12"/>
</dbReference>
<dbReference type="PROSITE" id="PS51216">
    <property type="entry name" value="NEBULIN"/>
    <property type="match status" value="12"/>
</dbReference>
<gene>
    <name type="primary">Nebl</name>
    <name type="synonym">Lnebl</name>
</gene>
<accession>Q0II04</accession>
<organism>
    <name type="scientific">Mus musculus</name>
    <name type="common">Mouse</name>
    <dbReference type="NCBI Taxonomy" id="10090"/>
    <lineage>
        <taxon>Eukaryota</taxon>
        <taxon>Metazoa</taxon>
        <taxon>Chordata</taxon>
        <taxon>Craniata</taxon>
        <taxon>Vertebrata</taxon>
        <taxon>Euteleostomi</taxon>
        <taxon>Mammalia</taxon>
        <taxon>Eutheria</taxon>
        <taxon>Euarchontoglires</taxon>
        <taxon>Glires</taxon>
        <taxon>Rodentia</taxon>
        <taxon>Myomorpha</taxon>
        <taxon>Muroidea</taxon>
        <taxon>Muridae</taxon>
        <taxon>Murinae</taxon>
        <taxon>Mus</taxon>
        <taxon>Mus</taxon>
    </lineage>
</organism>
<sequence length="452" mass="52201">MKVPVSGDVKEETEEENVEQEENQEAKVSLKPVIEDLSMELARKCTELISDIHYKEEYKKSKDKCTFVTDTPMLNHVKNIGAFISEAKYKGTIKADLSNCLYKDMPATIDSVFAREVSQLQSEVAYKQKHEAEKGFSDYTHMKEPPEVRRAMEVNRHQSNISYRKDMQGTHTYTAELDRPDIKKATQISKIISDAEYKKGQGIVNKEPSVIGRPDFEHAVGASKLSSQVKYKEKFDNEMKEKSHHYNPLGSAFFRQHQFAAVLASDWEYKRDFEENKGLYHFDAEAPEHLHHKGNATLQSQVKYREEYEKNKGKSMLEFVETPSYQSSKEAQKMQSEKVYKEDFEKEIKGRSSLDLDKTPAFLHVKHITNLMREKEYKKDLENEIKGKGMELSSEVLDIQRAKRASEMASEKDYKRDLETEIKGKGMQVSTDTLDVQRAKRASEMASQVRMV</sequence>
<proteinExistence type="evidence at protein level"/>
<evidence type="ECO:0000250" key="1">
    <source>
        <dbReference type="UniProtKB" id="O76041"/>
    </source>
</evidence>
<evidence type="ECO:0000256" key="2">
    <source>
        <dbReference type="SAM" id="MobiDB-lite"/>
    </source>
</evidence>
<keyword id="KW-0009">Actin-binding</keyword>
<keyword id="KW-0025">Alternative splicing</keyword>
<keyword id="KW-0963">Cytoplasm</keyword>
<keyword id="KW-1185">Reference proteome</keyword>
<keyword id="KW-0677">Repeat</keyword>
<feature type="chain" id="PRO_0000417584" description="Nebulette">
    <location>
        <begin position="1"/>
        <end position="452"/>
    </location>
</feature>
<feature type="repeat" description="Nebulin 1">
    <location>
        <begin position="29"/>
        <end position="63"/>
    </location>
</feature>
<feature type="repeat" description="Nebulin 2">
    <location>
        <begin position="64"/>
        <end position="98"/>
    </location>
</feature>
<feature type="repeat" description="Nebulin 3">
    <location>
        <begin position="101"/>
        <end position="135"/>
    </location>
</feature>
<feature type="repeat" description="Nebulin 4">
    <location>
        <begin position="138"/>
        <end position="172"/>
    </location>
</feature>
<feature type="repeat" description="Nebulin 5">
    <location>
        <begin position="173"/>
        <end position="199"/>
    </location>
</feature>
<feature type="repeat" description="Nebulin 6">
    <location>
        <begin position="206"/>
        <end position="240"/>
    </location>
</feature>
<feature type="repeat" description="Nebulin 7">
    <location>
        <begin position="263"/>
        <end position="278"/>
    </location>
</feature>
<feature type="repeat" description="Nebulin 8">
    <location>
        <begin position="279"/>
        <end position="313"/>
    </location>
</feature>
<feature type="repeat" description="Nebulin 9">
    <location>
        <begin position="315"/>
        <end position="349"/>
    </location>
</feature>
<feature type="repeat" description="Nebulin 10">
    <location>
        <begin position="352"/>
        <end position="386"/>
    </location>
</feature>
<feature type="repeat" description="Nebulin 11">
    <location>
        <begin position="389"/>
        <end position="423"/>
    </location>
</feature>
<feature type="repeat" description="Nebulin 12">
    <location>
        <begin position="426"/>
        <end position="452"/>
    </location>
</feature>
<feature type="region of interest" description="Disordered" evidence="2">
    <location>
        <begin position="1"/>
        <end position="26"/>
    </location>
</feature>
<feature type="compositionally biased region" description="Acidic residues" evidence="2">
    <location>
        <begin position="11"/>
        <end position="23"/>
    </location>
</feature>
<name>NEBL_MOUSE</name>
<reference key="1">
    <citation type="journal article" date="2009" name="PLoS Biol.">
        <title>Lineage-specific biology revealed by a finished genome assembly of the mouse.</title>
        <authorList>
            <person name="Church D.M."/>
            <person name="Goodstadt L."/>
            <person name="Hillier L.W."/>
            <person name="Zody M.C."/>
            <person name="Goldstein S."/>
            <person name="She X."/>
            <person name="Bult C.J."/>
            <person name="Agarwala R."/>
            <person name="Cherry J.L."/>
            <person name="DiCuccio M."/>
            <person name="Hlavina W."/>
            <person name="Kapustin Y."/>
            <person name="Meric P."/>
            <person name="Maglott D."/>
            <person name="Birtle Z."/>
            <person name="Marques A.C."/>
            <person name="Graves T."/>
            <person name="Zhou S."/>
            <person name="Teague B."/>
            <person name="Potamousis K."/>
            <person name="Churas C."/>
            <person name="Place M."/>
            <person name="Herschleb J."/>
            <person name="Runnheim R."/>
            <person name="Forrest D."/>
            <person name="Amos-Landgraf J."/>
            <person name="Schwartz D.C."/>
            <person name="Cheng Z."/>
            <person name="Lindblad-Toh K."/>
            <person name="Eichler E.E."/>
            <person name="Ponting C.P."/>
        </authorList>
    </citation>
    <scope>NUCLEOTIDE SEQUENCE [LARGE SCALE GENOMIC DNA]</scope>
    <source>
        <strain>C57BL/6J</strain>
    </source>
</reference>
<reference key="2">
    <citation type="journal article" date="2004" name="Genome Res.">
        <title>The status, quality, and expansion of the NIH full-length cDNA project: the Mammalian Gene Collection (MGC).</title>
        <authorList>
            <consortium name="The MGC Project Team"/>
        </authorList>
    </citation>
    <scope>NUCLEOTIDE SEQUENCE [LARGE SCALE MRNA] (ISOFORM 1)</scope>
</reference>
<reference key="3">
    <citation type="journal article" date="2010" name="Cell">
        <title>A tissue-specific atlas of mouse protein phosphorylation and expression.</title>
        <authorList>
            <person name="Huttlin E.L."/>
            <person name="Jedrychowski M.P."/>
            <person name="Elias J.E."/>
            <person name="Goswami T."/>
            <person name="Rad R."/>
            <person name="Beausoleil S.A."/>
            <person name="Villen J."/>
            <person name="Haas W."/>
            <person name="Sowa M.E."/>
            <person name="Gygi S.P."/>
        </authorList>
    </citation>
    <scope>IDENTIFICATION BY MASS SPECTROMETRY [LARGE SCALE ANALYSIS]</scope>
    <source>
        <tissue>Heart</tissue>
    </source>
</reference>